<proteinExistence type="evidence at protein level"/>
<feature type="chain" id="PRO_0000077259" description="Type I restriction enzyme EcoKI endonuclease subunit">
    <location>
        <begin position="1"/>
        <end position="1170"/>
    </location>
</feature>
<feature type="domain" description="Helicase ATP-binding" evidence="3">
    <location>
        <begin position="458"/>
        <end position="639"/>
    </location>
</feature>
<feature type="domain" description="Helicase C-terminal" evidence="4">
    <location>
        <begin position="714"/>
        <end position="879"/>
    </location>
</feature>
<feature type="DNA-binding region" description="H-T-H motif" evidence="1">
    <location>
        <begin position="431"/>
        <end position="450"/>
    </location>
</feature>
<feature type="coiled-coil region" evidence="2">
    <location>
        <begin position="143"/>
        <end position="229"/>
    </location>
</feature>
<feature type="short sequence motif" description="DEAH box" evidence="3">
    <location>
        <begin position="574"/>
        <end position="577"/>
    </location>
</feature>
<feature type="binding site" evidence="3">
    <location>
        <begin position="472"/>
        <end position="478"/>
    </location>
    <ligand>
        <name>ATP</name>
        <dbReference type="ChEBI" id="CHEBI:30616"/>
    </ligand>
</feature>
<feature type="sequence conflict" description="In Ref. 1; CAA29791." evidence="13" ref="1">
    <original>DAVKIALTATPALHTVQIFGEPVYRYTYRTAVIDGFLIDQDPPIQIITRNAQEGVYLSKGEQVERISP</original>
    <variation>ECGKNRSHRHPGATYCADFRRAGLPLYLPYRGYRRFSDRPGSAYSDHHPQRAGGGLSLQRRAGRAH</variation>
    <location>
        <begin position="611"/>
        <end position="678"/>
    </location>
</feature>
<accession>P08956</accession>
<accession>Q2M5W6</accession>
<sequence length="1170" mass="134095">MMNKSNFEFLKGVNDFTYAIACAAENNYPDDPNTTLIKMRMFGEATAKHLGLLLNIPPCENQHDLLRELGKIAFVDDNILSVFHKLRRIGNQAVHEYHNDLNDAQMCLRLGFRLAVWYYRLVTKDYDFPVPVFVLPERGENLYHQEVLTLKQQLEQQVREKAQTQAEVEAQQQKLVALNGYIAILEGKQQETEAQTQARLAALEAQLAEKNAELAKQTEQERKAYHKEITDQAIKRTLNLSEEESRFLIDAQLRKAGWQADSKTLRFSKGARPEPGVNKAIAEWPTGKDETGNQGFADYVLFVGLKPIAVVEAKRNNIDVPARLNESYRYSKCFDNGFLRETLLEHYSPDEVHEAVPEYETSWQDTSGKQRFKIPFCYSTNGREYRATMKTKSGIWYRDVRDTRNMSKALPEWHRPEELLEMLGSEPQKQNQWFADNPGMSELGLRYYQEDAVRAVEKAIVKGQQEILLAMATGTGKTRTAIAMMFRLIQSQRFKRILFLVDRRSLGEQALGAFEDTRINGDTFNSIFDIKGLTDKFPEDSTKIHVATVQSLVKRTLQSDEPMPVARYDCIVVDEAHRGYILDKEQTEGELQFRSQLDYVSAYRRILDHFDAVKIALTATPALHTVQIFGEPVYRYTYRTAVIDGFLIDQDPPIQIITRNAQEGVYLSKGEQVERISPQGEVINDTLEDDQDFEVADFNRGLVIPAFNRAVCNELTNYLDPTGSQKTLVFCVTNAHADMVVEELRAAFKKKYPQLEHDAIIKITGDADKDARKVQTMITRFNKERLPNIVVTVDLLTTGVDIPSICNIVFLRKVRSRILYEQMKGRATRLCPEVNKTSFKIFDCVDIYSTLESVDTMRPVVVRPKVELQTLVNEITDSETYKITEADGRSFAEHSHEQLVAKLQRIIGLATFNRDRSETIDKQVRRLDELCQDAAGVNFNGFASRLREKGPHWSAEVFNKLPGFIARLEKLKTDINNLNDAPIFLDIDDEVVSVKSLYGDYDTPQDFLEAFDSLVQRSPNAQPALQAVINRPRDLTRKGLVELQEWFDRQHFEESSLRKAWKETRNEDIAARLIGHIRRAAVGDALKPFEERVDHALTRIKGENDWSSEQLSWLDRLAQALKEKVVLDDDVFKTGNFHRRGGKAMLQRTFDDNLDTLLGKFSDYIWDELA</sequence>
<comment type="function">
    <text evidence="7 8 9 10 11">The subtype A restriction (R) subunit of a type I restriction enzyme that recognizes 5'-AACN(6)GTGC-3' and cleaves a random distance away. The R subunit is required for both endonuclease and ATPase activities but not for modification (PubMed:12654995, PubMed:4868368, PubMed:6255295, PubMed:9033396). Has endonucleolytic activity that requires Mg(2+), ATP and S-adenosyl-L-methionine (SAM); ATP can be replaced by dATP, no tested molecule could substitute for SAM. Generates double-stranded DNA with no nicks, by cutting one strand then the other within a few seconds. Cleaves only non-methylated DNA, hemi-methylated and fully methylated DNA are not substrates (PubMed:4868368, PubMed:9033396). After locating a non-methylated recognition site, the enzyme complex serves as a molecular motor that translocates DNA in an ATP-dependent manner until a collision occurs that triggers cleavage (PubMed:6248234).</text>
</comment>
<comment type="catalytic activity">
    <reaction evidence="7">
        <text>Endonucleolytic cleavage of DNA to give random double-stranded fragments with terminal 5'-phosphates, ATP is simultaneously hydrolyzed.</text>
        <dbReference type="EC" id="3.1.21.3"/>
    </reaction>
</comment>
<comment type="biophysicochemical properties">
    <phDependence>
        <text evidence="7">Optimum pH is 7.5-8.0 for DNA restriction.</text>
    </phDependence>
</comment>
<comment type="subunit">
    <text evidence="6 9 10 14">The type I restriction/modification system is composed of three polypeptides R, M and S (PubMed:6255295). The restriction enzyme has stoichiometry R(2)M(2)S(1) (PubMed:32483229, PubMed:9033396). The methyltransferase is composed of M(2)S(1) (Probable) (PubMed:9033396).</text>
</comment>
<comment type="subunit">
    <text evidence="5 6">(Microbial infection) Interacts with Escherichia phage T7 protein Ocr; this interaction leads to the inhibition of the type I bifunctional endonuclease and methyltransferase restriction enzyme R.EcoKI composed of R(2)M(2)S(1).</text>
</comment>
<comment type="induction">
    <text evidence="9 15">Encoded in the hsd locus, in the order hsdR-hsdM-hsdS. There is a promoter upstream of hsdR and another between hsdR and hsdM (PubMed:6255295). This probably allows expression of the methylase enzyme before the restriction-specific subunit (Probable).</text>
</comment>
<comment type="domain">
    <text evidence="6">The C-terminus (approximately residues 1003-1170) is required for interaction with M(2)S(1) and with Escherichia phage T7 Ocr protein.</text>
</comment>
<comment type="PTM">
    <text evidence="10">Upon purification after overexpression about one-third has the initiating methionine removed.</text>
</comment>
<comment type="miscellaneous">
    <text evidence="7 10">Type I restriction and modification enzymes are complex, multifunctional systems which require ATP, S-adenosyl methionine and magnesium as cofactors and, in addition to their endonucleolytic and methylase activities, are potent DNA-dependent ATPases.</text>
</comment>
<comment type="similarity">
    <text evidence="13">Belongs to the HsdR family.</text>
</comment>
<comment type="sequence caution" evidence="13">
    <conflict type="erroneous initiation">
        <sequence resource="EMBL-CDS" id="AAA97247"/>
    </conflict>
    <text>Extended N-terminus.</text>
</comment>
<comment type="sequence caution" evidence="13">
    <conflict type="erroneous initiation">
        <sequence resource="EMBL-CDS" id="BAE78340"/>
    </conflict>
    <text>Extended N-terminus.</text>
</comment>
<comment type="sequence caution" evidence="13">
    <conflict type="erroneous initiation">
        <sequence resource="EMBL-CDS" id="CAA29791"/>
    </conflict>
    <text>Extended N-terminus.</text>
</comment>
<comment type="sequence caution" evidence="13">
    <conflict type="frameshift">
        <sequence resource="EMBL-CDS" id="CAA29791"/>
    </conflict>
</comment>
<comment type="sequence caution" evidence="13">
    <conflict type="erroneous initiation">
        <sequence resource="EMBL-CDS" id="CAA38116"/>
    </conflict>
    <text>Extended N-terminus.</text>
</comment>
<organism>
    <name type="scientific">Escherichia coli (strain K12)</name>
    <dbReference type="NCBI Taxonomy" id="83333"/>
    <lineage>
        <taxon>Bacteria</taxon>
        <taxon>Pseudomonadati</taxon>
        <taxon>Pseudomonadota</taxon>
        <taxon>Gammaproteobacteria</taxon>
        <taxon>Enterobacterales</taxon>
        <taxon>Enterobacteriaceae</taxon>
        <taxon>Escherichia</taxon>
    </lineage>
</organism>
<protein>
    <recommendedName>
        <fullName evidence="11">Type I restriction enzyme EcoKI endonuclease subunit</fullName>
        <shortName evidence="11">EcoKI</shortName>
        <shortName>R protein</shortName>
        <ecNumber evidence="7">3.1.21.3</ecNumber>
    </recommendedName>
</protein>
<dbReference type="EC" id="3.1.21.3" evidence="7"/>
<dbReference type="EMBL" id="X06545">
    <property type="protein sequence ID" value="CAA29791.1"/>
    <property type="status" value="ALT_SEQ"/>
    <property type="molecule type" value="Genomic_DNA"/>
</dbReference>
<dbReference type="EMBL" id="U14003">
    <property type="protein sequence ID" value="AAA97247.1"/>
    <property type="status" value="ALT_INIT"/>
    <property type="molecule type" value="Genomic_DNA"/>
</dbReference>
<dbReference type="EMBL" id="U00096">
    <property type="protein sequence ID" value="AAC77306.2"/>
    <property type="molecule type" value="Genomic_DNA"/>
</dbReference>
<dbReference type="EMBL" id="AP009048">
    <property type="protein sequence ID" value="BAE78340.1"/>
    <property type="status" value="ALT_INIT"/>
    <property type="molecule type" value="Genomic_DNA"/>
</dbReference>
<dbReference type="EMBL" id="X54198">
    <property type="protein sequence ID" value="CAA38116.1"/>
    <property type="status" value="ALT_INIT"/>
    <property type="molecule type" value="Genomic_DNA"/>
</dbReference>
<dbReference type="PIR" id="S56576">
    <property type="entry name" value="NDECKR"/>
</dbReference>
<dbReference type="RefSeq" id="NP_418770.2">
    <property type="nucleotide sequence ID" value="NC_000913.3"/>
</dbReference>
<dbReference type="RefSeq" id="WP_000981388.1">
    <property type="nucleotide sequence ID" value="NZ_LN832404.1"/>
</dbReference>
<dbReference type="SMR" id="P08956"/>
<dbReference type="BioGRID" id="4262769">
    <property type="interactions" value="35"/>
</dbReference>
<dbReference type="ComplexPortal" id="CPX-5628">
    <property type="entry name" value="Type I restriction-modification EcoKI complex"/>
</dbReference>
<dbReference type="DIP" id="DIP-9944N"/>
<dbReference type="FunCoup" id="P08956">
    <property type="interactions" value="117"/>
</dbReference>
<dbReference type="IntAct" id="P08956">
    <property type="interactions" value="16"/>
</dbReference>
<dbReference type="STRING" id="511145.b4350"/>
<dbReference type="REBASE" id="13380">
    <property type="entry name" value="EcoW3110ORF4339P"/>
</dbReference>
<dbReference type="REBASE" id="152619">
    <property type="entry name" value="Rsp6212ORF1042P"/>
</dbReference>
<dbReference type="REBASE" id="152623">
    <property type="entry name" value="Rsp621ORF1043P"/>
</dbReference>
<dbReference type="REBASE" id="152628">
    <property type="entry name" value="Ret561ORF1035P"/>
</dbReference>
<dbReference type="REBASE" id="152640">
    <property type="entry name" value="Rsp1341ORF1035P"/>
</dbReference>
<dbReference type="REBASE" id="152652">
    <property type="entry name" value="Rsp113ORF1037P"/>
</dbReference>
<dbReference type="REBASE" id="152690">
    <property type="entry name" value="Rph931ORF1047P"/>
</dbReference>
<dbReference type="REBASE" id="152703">
    <property type="entry name" value="Rph831ORF1044P"/>
</dbReference>
<dbReference type="REBASE" id="152713">
    <property type="entry name" value="Rsp741ORF1035P"/>
</dbReference>
<dbReference type="REBASE" id="152735">
    <property type="entry name" value="Rsp871ORF1035P"/>
</dbReference>
<dbReference type="REBASE" id="156145">
    <property type="entry name" value="BamRD77ORF2498P"/>
</dbReference>
<dbReference type="REBASE" id="191895">
    <property type="entry name" value="Apa1447ORF2439P"/>
</dbReference>
<dbReference type="REBASE" id="204158">
    <property type="entry name" value="Bli1441ORF2992P"/>
</dbReference>
<dbReference type="REBASE" id="204718">
    <property type="entry name" value="Bsu333ORF2986P"/>
</dbReference>
<dbReference type="REBASE" id="205028">
    <property type="entry name" value="Bve72ORF2738P"/>
</dbReference>
<dbReference type="REBASE" id="205121">
    <property type="entry name" value="Bve1413ORF3003P"/>
</dbReference>
<dbReference type="REBASE" id="441883">
    <property type="entry name" value="EcoBL21FORF4361P"/>
</dbReference>
<dbReference type="REBASE" id="980">
    <property type="entry name" value="EcoKI"/>
</dbReference>
<dbReference type="TCDB" id="3.A.17.1.1">
    <property type="family name" value="the phage t7 injectisome (t7 injectisome) family"/>
</dbReference>
<dbReference type="PaxDb" id="511145-b4350"/>
<dbReference type="EnsemblBacteria" id="AAC77306">
    <property type="protein sequence ID" value="AAC77306"/>
    <property type="gene ID" value="b4350"/>
</dbReference>
<dbReference type="GeneID" id="948878"/>
<dbReference type="KEGG" id="ecj:JW4313"/>
<dbReference type="KEGG" id="eco:b4350"/>
<dbReference type="KEGG" id="ecoc:C3026_23500"/>
<dbReference type="PATRIC" id="fig|1411691.4.peg.2336"/>
<dbReference type="EchoBASE" id="EB0454"/>
<dbReference type="eggNOG" id="COG4096">
    <property type="taxonomic scope" value="Bacteria"/>
</dbReference>
<dbReference type="HOGENOM" id="CLU_007363_0_0_6"/>
<dbReference type="InParanoid" id="P08956"/>
<dbReference type="PhylomeDB" id="P08956"/>
<dbReference type="BioCyc" id="EcoCyc:EG10459-MONOMER"/>
<dbReference type="BioCyc" id="MetaCyc:EG10459-MONOMER"/>
<dbReference type="BRENDA" id="3.1.21.3">
    <property type="organism ID" value="2165"/>
</dbReference>
<dbReference type="PRO" id="PR:P08956"/>
<dbReference type="Proteomes" id="UP000000625">
    <property type="component" value="Chromosome"/>
</dbReference>
<dbReference type="GO" id="GO:0005829">
    <property type="term" value="C:cytosol"/>
    <property type="evidence" value="ECO:0000314"/>
    <property type="project" value="EcoCyc"/>
</dbReference>
<dbReference type="GO" id="GO:0019812">
    <property type="term" value="C:type I site-specific deoxyribonuclease complex"/>
    <property type="evidence" value="ECO:0000353"/>
    <property type="project" value="ComplexPortal"/>
</dbReference>
<dbReference type="GO" id="GO:0005524">
    <property type="term" value="F:ATP binding"/>
    <property type="evidence" value="ECO:0007669"/>
    <property type="project" value="UniProtKB-KW"/>
</dbReference>
<dbReference type="GO" id="GO:0003677">
    <property type="term" value="F:DNA binding"/>
    <property type="evidence" value="ECO:0007669"/>
    <property type="project" value="UniProtKB-KW"/>
</dbReference>
<dbReference type="GO" id="GO:0004386">
    <property type="term" value="F:helicase activity"/>
    <property type="evidence" value="ECO:0007669"/>
    <property type="project" value="UniProtKB-KW"/>
</dbReference>
<dbReference type="GO" id="GO:0009035">
    <property type="term" value="F:type I site-specific deoxyribonuclease activity"/>
    <property type="evidence" value="ECO:0007669"/>
    <property type="project" value="UniProtKB-EC"/>
</dbReference>
<dbReference type="GO" id="GO:0009307">
    <property type="term" value="P:DNA restriction-modification system"/>
    <property type="evidence" value="ECO:0000314"/>
    <property type="project" value="ComplexPortal"/>
</dbReference>
<dbReference type="CDD" id="cd18032">
    <property type="entry name" value="DEXHc_RE_I_III_res"/>
    <property type="match status" value="1"/>
</dbReference>
<dbReference type="CDD" id="cd18799">
    <property type="entry name" value="SF2_C_EcoAI-like"/>
    <property type="match status" value="1"/>
</dbReference>
<dbReference type="FunFam" id="3.90.1570.30:FF:000001">
    <property type="entry name" value="Type I restriction enzyme EcoKI subunit R"/>
    <property type="match status" value="1"/>
</dbReference>
<dbReference type="FunFam" id="3.40.50.300:FF:002045">
    <property type="entry name" value="Type I restriction-modification system endonuclease"/>
    <property type="match status" value="1"/>
</dbReference>
<dbReference type="FunFam" id="3.40.50.300:FF:002353">
    <property type="entry name" value="Type I restriction-modification system endonuclease"/>
    <property type="match status" value="1"/>
</dbReference>
<dbReference type="Gene3D" id="3.90.1570.30">
    <property type="match status" value="1"/>
</dbReference>
<dbReference type="Gene3D" id="3.40.50.300">
    <property type="entry name" value="P-loop containing nucleotide triphosphate hydrolases"/>
    <property type="match status" value="2"/>
</dbReference>
<dbReference type="InterPro" id="IPR013670">
    <property type="entry name" value="EcoEI_R_C_dom"/>
</dbReference>
<dbReference type="InterPro" id="IPR006935">
    <property type="entry name" value="Helicase/UvrB_N"/>
</dbReference>
<dbReference type="InterPro" id="IPR014001">
    <property type="entry name" value="Helicase_ATP-bd"/>
</dbReference>
<dbReference type="InterPro" id="IPR001650">
    <property type="entry name" value="Helicase_C-like"/>
</dbReference>
<dbReference type="InterPro" id="IPR050742">
    <property type="entry name" value="Helicase_Restrict-Modif_Enz"/>
</dbReference>
<dbReference type="InterPro" id="IPR027417">
    <property type="entry name" value="P-loop_NTPase"/>
</dbReference>
<dbReference type="InterPro" id="IPR007409">
    <property type="entry name" value="Restrct_endonuc_type1_HsdR_N"/>
</dbReference>
<dbReference type="NCBIfam" id="NF008521">
    <property type="entry name" value="PRK11448.1"/>
    <property type="match status" value="1"/>
</dbReference>
<dbReference type="PANTHER" id="PTHR47396:SF1">
    <property type="entry name" value="ATP-DEPENDENT HELICASE IRC3-RELATED"/>
    <property type="match status" value="1"/>
</dbReference>
<dbReference type="PANTHER" id="PTHR47396">
    <property type="entry name" value="TYPE I RESTRICTION ENZYME ECOKI R PROTEIN"/>
    <property type="match status" value="1"/>
</dbReference>
<dbReference type="Pfam" id="PF08463">
    <property type="entry name" value="EcoEI_R_C"/>
    <property type="match status" value="1"/>
</dbReference>
<dbReference type="Pfam" id="PF00271">
    <property type="entry name" value="Helicase_C"/>
    <property type="match status" value="1"/>
</dbReference>
<dbReference type="Pfam" id="PF04313">
    <property type="entry name" value="HSDR_N"/>
    <property type="match status" value="1"/>
</dbReference>
<dbReference type="Pfam" id="PF04851">
    <property type="entry name" value="ResIII"/>
    <property type="match status" value="1"/>
</dbReference>
<dbReference type="SMART" id="SM00487">
    <property type="entry name" value="DEXDc"/>
    <property type="match status" value="1"/>
</dbReference>
<dbReference type="SMART" id="SM00490">
    <property type="entry name" value="HELICc"/>
    <property type="match status" value="1"/>
</dbReference>
<dbReference type="SUPFAM" id="SSF52540">
    <property type="entry name" value="P-loop containing nucleoside triphosphate hydrolases"/>
    <property type="match status" value="1"/>
</dbReference>
<dbReference type="PROSITE" id="PS51192">
    <property type="entry name" value="HELICASE_ATP_BIND_1"/>
    <property type="match status" value="1"/>
</dbReference>
<dbReference type="PROSITE" id="PS51194">
    <property type="entry name" value="HELICASE_CTER"/>
    <property type="match status" value="1"/>
</dbReference>
<name>T1RK_ECOLI</name>
<gene>
    <name evidence="12" type="primary">hsdR</name>
    <name type="synonym">hsr</name>
    <name type="ordered locus">b4350</name>
    <name type="ordered locus">JW4313</name>
</gene>
<evidence type="ECO:0000250" key="1"/>
<evidence type="ECO:0000255" key="2"/>
<evidence type="ECO:0000255" key="3">
    <source>
        <dbReference type="PROSITE-ProRule" id="PRU00541"/>
    </source>
</evidence>
<evidence type="ECO:0000255" key="4">
    <source>
        <dbReference type="PROSITE-ProRule" id="PRU00542"/>
    </source>
</evidence>
<evidence type="ECO:0000269" key="5">
    <source>
    </source>
</evidence>
<evidence type="ECO:0000269" key="6">
    <source>
    </source>
</evidence>
<evidence type="ECO:0000269" key="7">
    <source>
    </source>
</evidence>
<evidence type="ECO:0000269" key="8">
    <source>
    </source>
</evidence>
<evidence type="ECO:0000269" key="9">
    <source>
    </source>
</evidence>
<evidence type="ECO:0000269" key="10">
    <source>
    </source>
</evidence>
<evidence type="ECO:0000303" key="11">
    <source>
    </source>
</evidence>
<evidence type="ECO:0000303" key="12">
    <source>
    </source>
</evidence>
<evidence type="ECO:0000305" key="13"/>
<evidence type="ECO:0000305" key="14">
    <source>
    </source>
</evidence>
<evidence type="ECO:0000305" key="15">
    <source>
    </source>
</evidence>
<reference key="1">
    <citation type="journal article" date="1987" name="J. Mol. Biol.">
        <title>Organization and sequence of the hsd genes of Escherichia coli K-12.</title>
        <authorList>
            <person name="Loenen W.A.M."/>
            <person name="Daniel A.S."/>
            <person name="Braymer H.D."/>
            <person name="Murray N.E."/>
        </authorList>
    </citation>
    <scope>NUCLEOTIDE SEQUENCE [GENOMIC DNA]</scope>
    <source>
        <strain>K12</strain>
    </source>
</reference>
<reference key="2">
    <citation type="journal article" date="1995" name="Nucleic Acids Res.">
        <title>Analysis of the Escherichia coli genome VI: DNA sequence of the region from 92.8 through 100 minutes.</title>
        <authorList>
            <person name="Burland V.D."/>
            <person name="Plunkett G. III"/>
            <person name="Sofia H.J."/>
            <person name="Daniels D.L."/>
            <person name="Blattner F.R."/>
        </authorList>
    </citation>
    <scope>NUCLEOTIDE SEQUENCE [LARGE SCALE GENOMIC DNA]</scope>
    <source>
        <strain>K12 / MG1655 / ATCC 47076</strain>
    </source>
</reference>
<reference key="3">
    <citation type="journal article" date="1997" name="Science">
        <title>The complete genome sequence of Escherichia coli K-12.</title>
        <authorList>
            <person name="Blattner F.R."/>
            <person name="Plunkett G. III"/>
            <person name="Bloch C.A."/>
            <person name="Perna N.T."/>
            <person name="Burland V."/>
            <person name="Riley M."/>
            <person name="Collado-Vides J."/>
            <person name="Glasner J.D."/>
            <person name="Rode C.K."/>
            <person name="Mayhew G.F."/>
            <person name="Gregor J."/>
            <person name="Davis N.W."/>
            <person name="Kirkpatrick H.A."/>
            <person name="Goeden M.A."/>
            <person name="Rose D.J."/>
            <person name="Mau B."/>
            <person name="Shao Y."/>
        </authorList>
    </citation>
    <scope>NUCLEOTIDE SEQUENCE [LARGE SCALE GENOMIC DNA]</scope>
    <source>
        <strain>K12 / MG1655 / ATCC 47076</strain>
    </source>
</reference>
<reference key="4">
    <citation type="journal article" date="2006" name="Mol. Syst. Biol.">
        <title>Highly accurate genome sequences of Escherichia coli K-12 strains MG1655 and W3110.</title>
        <authorList>
            <person name="Hayashi K."/>
            <person name="Morooka N."/>
            <person name="Yamamoto Y."/>
            <person name="Fujita K."/>
            <person name="Isono K."/>
            <person name="Choi S."/>
            <person name="Ohtsubo E."/>
            <person name="Baba T."/>
            <person name="Wanner B.L."/>
            <person name="Mori H."/>
            <person name="Horiuchi T."/>
        </authorList>
    </citation>
    <scope>NUCLEOTIDE SEQUENCE [LARGE SCALE GENOMIC DNA]</scope>
    <source>
        <strain>K12 / W3110 / ATCC 27325 / DSM 5911</strain>
    </source>
</reference>
<reference key="5">
    <citation type="journal article" date="1991" name="J. Bacteriol.">
        <title>Characterization and expression of the Escherichia coli Mrr restriction system.</title>
        <authorList>
            <person name="Waite-Rees P.A."/>
            <person name="Keating C.J."/>
            <person name="Moran L.S."/>
            <person name="Slatko B.E."/>
            <person name="Hornstra L.J."/>
            <person name="Benner J.S."/>
        </authorList>
    </citation>
    <scope>NUCLEOTIDE SEQUENCE [GENOMIC DNA] OF 1-9</scope>
    <source>
        <strain>K12 / CR63</strain>
    </source>
</reference>
<reference key="6">
    <citation type="journal article" date="1997" name="Biochemistry">
        <title>The in vitro assembly of the EcoKI type I DNA restriction/modification enzyme and its in vivo implications.</title>
        <authorList>
            <person name="Dryden D.T."/>
            <person name="Cooper L.P."/>
            <person name="Thorpe P.H."/>
            <person name="Byron O."/>
        </authorList>
    </citation>
    <scope>PROTEIN SEQUENCE OF 1-6 AND 2-6</scope>
    <scope>FUNCTION</scope>
    <scope>SUBUNIT</scope>
    <source>
        <strain>K12</strain>
    </source>
</reference>
<reference key="7">
    <citation type="journal article" date="1968" name="Nature">
        <title>DNA restriction enzyme from E. coli.</title>
        <authorList>
            <person name="Meselson M."/>
            <person name="Yuan R."/>
        </authorList>
    </citation>
    <scope>FUNCTION</scope>
    <scope>CATALYTIC ACTIVITY</scope>
    <scope>SUBSTRATE SPECIFICITY</scope>
    <scope>ATP AND S-ADENOSYL-METHIONINE REQUIREMENT</scope>
    <scope>BIOPHYSICOCHEMICAL PROPERTIES</scope>
    <source>
        <strain>K12</strain>
    </source>
</reference>
<reference key="8">
    <citation type="journal article" date="1980" name="Mol. Gen. Genet.">
        <title>The hsd (host specificity) genes of E. coli K 12.</title>
        <authorList>
            <person name="Sain B."/>
            <person name="Murray N.E."/>
        </authorList>
    </citation>
    <scope>FUNCTION</scope>
    <scope>SUBUNIT</scope>
    <scope>OPERON STRUCTURE</scope>
    <source>
        <strain>K12</strain>
    </source>
</reference>
<reference key="9">
    <citation type="journal article" date="1980" name="Cell">
        <title>DNA translocation by the restriction enzyme from E. coli K.</title>
        <authorList>
            <person name="Yuan R."/>
            <person name="Hamilton D.L."/>
            <person name="Burckhardt J."/>
        </authorList>
    </citation>
    <scope>FUNCTION</scope>
    <scope>REACTION MECHANISM</scope>
    <source>
        <strain>K12</strain>
    </source>
</reference>
<reference key="10">
    <citation type="journal article" date="2002" name="Nucleic Acids Res.">
        <title>Interaction of the ocr gene 0.3 protein of bacteriophage T7 with EcoKI restriction/modification enzyme.</title>
        <authorList>
            <person name="Atanasiu C."/>
            <person name="Su T.J."/>
            <person name="Sturrock S.S."/>
            <person name="Dryden D.T."/>
        </authorList>
    </citation>
    <scope>INTERACTION WITH ESCHERICHIA PHAGE T7 PROTEIN OCR (MICROBIAL INFECTION)</scope>
    <source>
        <strain>K12</strain>
    </source>
</reference>
<reference key="11">
    <citation type="journal article" date="2003" name="Nucleic Acids Res.">
        <title>A nomenclature for restriction enzymes, DNA methyltransferases, homing endonucleases and their genes.</title>
        <authorList>
            <person name="Roberts R.J."/>
            <person name="Belfort M."/>
            <person name="Bestor T."/>
            <person name="Bhagwat A.S."/>
            <person name="Bickle T.A."/>
            <person name="Bitinaite J."/>
            <person name="Blumenthal R.M."/>
            <person name="Degtyarev S.K."/>
            <person name="Dryden D.T."/>
            <person name="Dybvig K."/>
            <person name="Firman K."/>
            <person name="Gromova E.S."/>
            <person name="Gumport R.I."/>
            <person name="Halford S.E."/>
            <person name="Hattman S."/>
            <person name="Heitman J."/>
            <person name="Hornby D.P."/>
            <person name="Janulaitis A."/>
            <person name="Jeltsch A."/>
            <person name="Josephsen J."/>
            <person name="Kiss A."/>
            <person name="Klaenhammer T.R."/>
            <person name="Kobayashi I."/>
            <person name="Kong H."/>
            <person name="Krueger D.H."/>
            <person name="Lacks S."/>
            <person name="Marinus M.G."/>
            <person name="Miyahara M."/>
            <person name="Morgan R.D."/>
            <person name="Murray N.E."/>
            <person name="Nagaraja V."/>
            <person name="Piekarowicz A."/>
            <person name="Pingoud A."/>
            <person name="Raleigh E."/>
            <person name="Rao D.N."/>
            <person name="Reich N."/>
            <person name="Repin V.E."/>
            <person name="Selker E.U."/>
            <person name="Shaw P.C."/>
            <person name="Stein D.C."/>
            <person name="Stoddard B.L."/>
            <person name="Szybalski W."/>
            <person name="Trautner T.A."/>
            <person name="Van Etten J.L."/>
            <person name="Vitor J.M."/>
            <person name="Wilson G.G."/>
            <person name="Xu S.Y."/>
        </authorList>
    </citation>
    <scope>NOMENCLATURE</scope>
    <scope>SUBTYPE</scope>
</reference>
<reference key="12">
    <citation type="journal article" date="2020" name="Nat. Microbiol.">
        <title>Structural insights into assembly, operation and inhibition of a type I restriction-modification system.</title>
        <authorList>
            <person name="Gao Y."/>
            <person name="Cao D."/>
            <person name="Zhu J."/>
            <person name="Feng H."/>
            <person name="Luo X."/>
            <person name="Liu S."/>
            <person name="Yan X.X."/>
            <person name="Zhang X."/>
            <person name="Gao P."/>
        </authorList>
    </citation>
    <scope>SUBUNIT</scope>
    <scope>INTERACTION WITH ESCHERICHIA PHAGE T7 PROTEIN OCR (MICROBIAL INFECTION)</scope>
    <scope>DOMAIN</scope>
</reference>
<keyword id="KW-0067">ATP-binding</keyword>
<keyword id="KW-0175">Coiled coil</keyword>
<keyword id="KW-0903">Direct protein sequencing</keyword>
<keyword id="KW-0238">DNA-binding</keyword>
<keyword id="KW-0255">Endonuclease</keyword>
<keyword id="KW-0347">Helicase</keyword>
<keyword id="KW-0945">Host-virus interaction</keyword>
<keyword id="KW-0378">Hydrolase</keyword>
<keyword id="KW-0540">Nuclease</keyword>
<keyword id="KW-0547">Nucleotide-binding</keyword>
<keyword id="KW-1185">Reference proteome</keyword>
<keyword id="KW-0680">Restriction system</keyword>